<evidence type="ECO:0000255" key="1">
    <source>
        <dbReference type="HAMAP-Rule" id="MF_01327"/>
    </source>
</evidence>
<dbReference type="EC" id="2.5.1.3" evidence="1"/>
<dbReference type="EMBL" id="CP000554">
    <property type="protein sequence ID" value="ABM78681.1"/>
    <property type="molecule type" value="Genomic_DNA"/>
</dbReference>
<dbReference type="RefSeq" id="WP_011826564.1">
    <property type="nucleotide sequence ID" value="NC_008820.1"/>
</dbReference>
<dbReference type="SMR" id="A2CB21"/>
<dbReference type="STRING" id="59922.P9303_19391"/>
<dbReference type="KEGG" id="pmf:P9303_19391"/>
<dbReference type="HOGENOM" id="CLU_064900_0_0_3"/>
<dbReference type="BioCyc" id="PMAR59922:G1G80-1684-MONOMER"/>
<dbReference type="UniPathway" id="UPA00060">
    <property type="reaction ID" value="UER00141"/>
</dbReference>
<dbReference type="Proteomes" id="UP000002274">
    <property type="component" value="Chromosome"/>
</dbReference>
<dbReference type="GO" id="GO:0005737">
    <property type="term" value="C:cytoplasm"/>
    <property type="evidence" value="ECO:0007669"/>
    <property type="project" value="TreeGrafter"/>
</dbReference>
<dbReference type="GO" id="GO:0000287">
    <property type="term" value="F:magnesium ion binding"/>
    <property type="evidence" value="ECO:0007669"/>
    <property type="project" value="UniProtKB-UniRule"/>
</dbReference>
<dbReference type="GO" id="GO:0004789">
    <property type="term" value="F:thiamine-phosphate diphosphorylase activity"/>
    <property type="evidence" value="ECO:0007669"/>
    <property type="project" value="UniProtKB-UniRule"/>
</dbReference>
<dbReference type="GO" id="GO:0009228">
    <property type="term" value="P:thiamine biosynthetic process"/>
    <property type="evidence" value="ECO:0007669"/>
    <property type="project" value="UniProtKB-KW"/>
</dbReference>
<dbReference type="GO" id="GO:0009229">
    <property type="term" value="P:thiamine diphosphate biosynthetic process"/>
    <property type="evidence" value="ECO:0007669"/>
    <property type="project" value="UniProtKB-UniRule"/>
</dbReference>
<dbReference type="CDD" id="cd00564">
    <property type="entry name" value="TMP_TenI"/>
    <property type="match status" value="1"/>
</dbReference>
<dbReference type="FunFam" id="3.20.20.70:FF:000096">
    <property type="entry name" value="Thiamine-phosphate synthase"/>
    <property type="match status" value="1"/>
</dbReference>
<dbReference type="Gene3D" id="3.20.20.70">
    <property type="entry name" value="Aldolase class I"/>
    <property type="match status" value="1"/>
</dbReference>
<dbReference type="HAMAP" id="MF_00097">
    <property type="entry name" value="TMP_synthase"/>
    <property type="match status" value="1"/>
</dbReference>
<dbReference type="HAMAP" id="MF_01327">
    <property type="entry name" value="TMP_synthase_cyanobact"/>
    <property type="match status" value="1"/>
</dbReference>
<dbReference type="InterPro" id="IPR013785">
    <property type="entry name" value="Aldolase_TIM"/>
</dbReference>
<dbReference type="InterPro" id="IPR036206">
    <property type="entry name" value="ThiamineP_synth_sf"/>
</dbReference>
<dbReference type="InterPro" id="IPR022998">
    <property type="entry name" value="ThiamineP_synth_TenI"/>
</dbReference>
<dbReference type="InterPro" id="IPR041397">
    <property type="entry name" value="ThiD2"/>
</dbReference>
<dbReference type="InterPro" id="IPR034291">
    <property type="entry name" value="TMP_synthase"/>
</dbReference>
<dbReference type="InterPro" id="IPR016229">
    <property type="entry name" value="TMP_synthase_cyanobac_bac"/>
</dbReference>
<dbReference type="NCBIfam" id="NF002727">
    <property type="entry name" value="PRK02615.1"/>
    <property type="match status" value="1"/>
</dbReference>
<dbReference type="NCBIfam" id="TIGR00693">
    <property type="entry name" value="thiE"/>
    <property type="match status" value="1"/>
</dbReference>
<dbReference type="PANTHER" id="PTHR20857">
    <property type="entry name" value="THIAMINE-PHOSPHATE PYROPHOSPHORYLASE"/>
    <property type="match status" value="1"/>
</dbReference>
<dbReference type="PANTHER" id="PTHR20857:SF15">
    <property type="entry name" value="THIAMINE-PHOSPHATE SYNTHASE"/>
    <property type="match status" value="1"/>
</dbReference>
<dbReference type="Pfam" id="PF17792">
    <property type="entry name" value="ThiD2"/>
    <property type="match status" value="1"/>
</dbReference>
<dbReference type="Pfam" id="PF02581">
    <property type="entry name" value="TMP-TENI"/>
    <property type="match status" value="1"/>
</dbReference>
<dbReference type="PIRSF" id="PIRSF000512">
    <property type="entry name" value="TMP_PPase_Cyanobac_prd"/>
    <property type="match status" value="1"/>
</dbReference>
<dbReference type="SUPFAM" id="SSF51391">
    <property type="entry name" value="Thiamin phosphate synthase"/>
    <property type="match status" value="1"/>
</dbReference>
<feature type="chain" id="PRO_1000052340" description="Thiamine-phosphate synthase">
    <location>
        <begin position="1"/>
        <end position="353"/>
    </location>
</feature>
<feature type="region of interest" description="Unknown">
    <location>
        <begin position="1"/>
        <end position="128"/>
    </location>
</feature>
<feature type="region of interest" description="Thiamine-phosphate synthase">
    <location>
        <begin position="129"/>
        <end position="353"/>
    </location>
</feature>
<feature type="binding site" evidence="1">
    <location>
        <begin position="185"/>
        <end position="189"/>
    </location>
    <ligand>
        <name>4-amino-2-methyl-5-(diphosphooxymethyl)pyrimidine</name>
        <dbReference type="ChEBI" id="CHEBI:57841"/>
    </ligand>
</feature>
<feature type="binding site" evidence="1">
    <location>
        <position position="217"/>
    </location>
    <ligand>
        <name>4-amino-2-methyl-5-(diphosphooxymethyl)pyrimidine</name>
        <dbReference type="ChEBI" id="CHEBI:57841"/>
    </ligand>
</feature>
<feature type="binding site" evidence="1">
    <location>
        <position position="218"/>
    </location>
    <ligand>
        <name>Mg(2+)</name>
        <dbReference type="ChEBI" id="CHEBI:18420"/>
    </ligand>
</feature>
<feature type="binding site" evidence="1">
    <location>
        <position position="237"/>
    </location>
    <ligand>
        <name>Mg(2+)</name>
        <dbReference type="ChEBI" id="CHEBI:18420"/>
    </ligand>
</feature>
<feature type="binding site" evidence="1">
    <location>
        <position position="256"/>
    </location>
    <ligand>
        <name>4-amino-2-methyl-5-(diphosphooxymethyl)pyrimidine</name>
        <dbReference type="ChEBI" id="CHEBI:57841"/>
    </ligand>
</feature>
<feature type="binding site" evidence="1">
    <location>
        <begin position="282"/>
        <end position="284"/>
    </location>
    <ligand>
        <name>2-[(2R,5Z)-2-carboxy-4-methylthiazol-5(2H)-ylidene]ethyl phosphate</name>
        <dbReference type="ChEBI" id="CHEBI:62899"/>
    </ligand>
</feature>
<feature type="binding site" evidence="1">
    <location>
        <position position="285"/>
    </location>
    <ligand>
        <name>4-amino-2-methyl-5-(diphosphooxymethyl)pyrimidine</name>
        <dbReference type="ChEBI" id="CHEBI:57841"/>
    </ligand>
</feature>
<feature type="binding site" evidence="1">
    <location>
        <position position="312"/>
    </location>
    <ligand>
        <name>2-[(2R,5Z)-2-carboxy-4-methylthiazol-5(2H)-ylidene]ethyl phosphate</name>
        <dbReference type="ChEBI" id="CHEBI:62899"/>
    </ligand>
</feature>
<reference key="1">
    <citation type="journal article" date="2007" name="PLoS Genet.">
        <title>Patterns and implications of gene gain and loss in the evolution of Prochlorococcus.</title>
        <authorList>
            <person name="Kettler G.C."/>
            <person name="Martiny A.C."/>
            <person name="Huang K."/>
            <person name="Zucker J."/>
            <person name="Coleman M.L."/>
            <person name="Rodrigue S."/>
            <person name="Chen F."/>
            <person name="Lapidus A."/>
            <person name="Ferriera S."/>
            <person name="Johnson J."/>
            <person name="Steglich C."/>
            <person name="Church G.M."/>
            <person name="Richardson P."/>
            <person name="Chisholm S.W."/>
        </authorList>
    </citation>
    <scope>NUCLEOTIDE SEQUENCE [LARGE SCALE GENOMIC DNA]</scope>
    <source>
        <strain>MIT 9303</strain>
    </source>
</reference>
<organism>
    <name type="scientific">Prochlorococcus marinus (strain MIT 9303)</name>
    <dbReference type="NCBI Taxonomy" id="59922"/>
    <lineage>
        <taxon>Bacteria</taxon>
        <taxon>Bacillati</taxon>
        <taxon>Cyanobacteriota</taxon>
        <taxon>Cyanophyceae</taxon>
        <taxon>Synechococcales</taxon>
        <taxon>Prochlorococcaceae</taxon>
        <taxon>Prochlorococcus</taxon>
    </lineage>
</organism>
<accession>A2CB21</accession>
<sequence>MKSMPVAPIADLRVAQLIDANLDRAREGLRVVEDWCRFGLDREDLVVTLKDWRQRLGRHHHDSYKQARSTATDQGIGLSHPAQQERHEPWHVVAANCARVQEALRVLEEFARQPDPQLAASAAAIRYGLYDLEVTVLQANAGKKRRQQLQACHLCLITTSQSDLANNDLFRTVSAALVAGIDMVQYRNKEASDLQRLTQAKELASLCRKHGALFIVNDRIDLALAVDADGVHLGQDDLPTDVARGLIGSERLLGRSTQFLAQLQKAEAEGCDYLGVGPVNSTATKPERQPIGLAYVKEASKATQLPWFAIGGINISNLEAVRQAGAKRIAVIGAIMNSKDPAATSLQLLEALR</sequence>
<comment type="function">
    <text evidence="1">Condenses 4-methyl-5-(beta-hydroxyethyl)thiazole monophosphate (THZ-P) and 2-methyl-4-amino-5-hydroxymethyl pyrimidine pyrophosphate (HMP-PP) to form thiamine monophosphate (TMP).</text>
</comment>
<comment type="catalytic activity">
    <reaction evidence="1">
        <text>2-[(2R,5Z)-2-carboxy-4-methylthiazol-5(2H)-ylidene]ethyl phosphate + 4-amino-2-methyl-5-(diphosphooxymethyl)pyrimidine + 2 H(+) = thiamine phosphate + CO2 + diphosphate</text>
        <dbReference type="Rhea" id="RHEA:47844"/>
        <dbReference type="ChEBI" id="CHEBI:15378"/>
        <dbReference type="ChEBI" id="CHEBI:16526"/>
        <dbReference type="ChEBI" id="CHEBI:33019"/>
        <dbReference type="ChEBI" id="CHEBI:37575"/>
        <dbReference type="ChEBI" id="CHEBI:57841"/>
        <dbReference type="ChEBI" id="CHEBI:62899"/>
        <dbReference type="EC" id="2.5.1.3"/>
    </reaction>
</comment>
<comment type="catalytic activity">
    <reaction evidence="1">
        <text>2-(2-carboxy-4-methylthiazol-5-yl)ethyl phosphate + 4-amino-2-methyl-5-(diphosphooxymethyl)pyrimidine + 2 H(+) = thiamine phosphate + CO2 + diphosphate</text>
        <dbReference type="Rhea" id="RHEA:47848"/>
        <dbReference type="ChEBI" id="CHEBI:15378"/>
        <dbReference type="ChEBI" id="CHEBI:16526"/>
        <dbReference type="ChEBI" id="CHEBI:33019"/>
        <dbReference type="ChEBI" id="CHEBI:37575"/>
        <dbReference type="ChEBI" id="CHEBI:57841"/>
        <dbReference type="ChEBI" id="CHEBI:62890"/>
        <dbReference type="EC" id="2.5.1.3"/>
    </reaction>
</comment>
<comment type="catalytic activity">
    <reaction evidence="1">
        <text>4-methyl-5-(2-phosphooxyethyl)-thiazole + 4-amino-2-methyl-5-(diphosphooxymethyl)pyrimidine + H(+) = thiamine phosphate + diphosphate</text>
        <dbReference type="Rhea" id="RHEA:22328"/>
        <dbReference type="ChEBI" id="CHEBI:15378"/>
        <dbReference type="ChEBI" id="CHEBI:33019"/>
        <dbReference type="ChEBI" id="CHEBI:37575"/>
        <dbReference type="ChEBI" id="CHEBI:57841"/>
        <dbReference type="ChEBI" id="CHEBI:58296"/>
        <dbReference type="EC" id="2.5.1.3"/>
    </reaction>
</comment>
<comment type="cofactor">
    <cofactor evidence="1">
        <name>Mg(2+)</name>
        <dbReference type="ChEBI" id="CHEBI:18420"/>
    </cofactor>
    <text evidence="1">Binds 1 Mg(2+) ion per subunit.</text>
</comment>
<comment type="pathway">
    <text evidence="1">Cofactor biosynthesis; thiamine diphosphate biosynthesis; thiamine phosphate from 4-amino-2-methyl-5-diphosphomethylpyrimidine and 4-methyl-5-(2-phosphoethyl)-thiazole: step 1/1.</text>
</comment>
<comment type="similarity">
    <text evidence="1">Belongs to the thiamine-phosphate synthase family.</text>
</comment>
<protein>
    <recommendedName>
        <fullName evidence="1">Thiamine-phosphate synthase</fullName>
        <shortName evidence="1">TP synthase</shortName>
        <shortName evidence="1">TPS</shortName>
        <ecNumber evidence="1">2.5.1.3</ecNumber>
    </recommendedName>
    <alternativeName>
        <fullName evidence="1">Thiamine-phosphate pyrophosphorylase</fullName>
        <shortName evidence="1">TMP pyrophosphorylase</shortName>
        <shortName evidence="1">TMP-PPase</shortName>
    </alternativeName>
</protein>
<keyword id="KW-0460">Magnesium</keyword>
<keyword id="KW-0479">Metal-binding</keyword>
<keyword id="KW-0784">Thiamine biosynthesis</keyword>
<keyword id="KW-0808">Transferase</keyword>
<gene>
    <name evidence="1" type="primary">thiE</name>
    <name type="ordered locus">P9303_19391</name>
</gene>
<proteinExistence type="inferred from homology"/>
<name>THIE_PROM3</name>